<accession>Q58H57</accession>
<name>CBS_MACFA</name>
<gene>
    <name type="primary">CBS</name>
</gene>
<keyword id="KW-0028">Amino-acid biosynthesis</keyword>
<keyword id="KW-0129">CBS domain</keyword>
<keyword id="KW-0198">Cysteine biosynthesis</keyword>
<keyword id="KW-0963">Cytoplasm</keyword>
<keyword id="KW-0349">Heme</keyword>
<keyword id="KW-0408">Iron</keyword>
<keyword id="KW-1017">Isopeptide bond</keyword>
<keyword id="KW-0456">Lyase</keyword>
<keyword id="KW-0479">Metal-binding</keyword>
<keyword id="KW-0539">Nucleus</keyword>
<keyword id="KW-0597">Phosphoprotein</keyword>
<keyword id="KW-0663">Pyridoxal phosphate</keyword>
<keyword id="KW-1185">Reference proteome</keyword>
<keyword id="KW-0832">Ubl conjugation</keyword>
<protein>
    <recommendedName>
        <fullName evidence="5">Cystathionine beta-synthase</fullName>
        <ecNumber evidence="2">4.2.1.22</ecNumber>
    </recommendedName>
    <alternativeName>
        <fullName>Beta-thionase</fullName>
    </alternativeName>
    <alternativeName>
        <fullName>Serine sulfhydrase</fullName>
    </alternativeName>
</protein>
<proteinExistence type="evidence at transcript level"/>
<organism>
    <name type="scientific">Macaca fascicularis</name>
    <name type="common">Crab-eating macaque</name>
    <name type="synonym">Cynomolgus monkey</name>
    <dbReference type="NCBI Taxonomy" id="9541"/>
    <lineage>
        <taxon>Eukaryota</taxon>
        <taxon>Metazoa</taxon>
        <taxon>Chordata</taxon>
        <taxon>Craniata</taxon>
        <taxon>Vertebrata</taxon>
        <taxon>Euteleostomi</taxon>
        <taxon>Mammalia</taxon>
        <taxon>Eutheria</taxon>
        <taxon>Euarchontoglires</taxon>
        <taxon>Primates</taxon>
        <taxon>Haplorrhini</taxon>
        <taxon>Catarrhini</taxon>
        <taxon>Cercopithecidae</taxon>
        <taxon>Cercopithecinae</taxon>
        <taxon>Macaca</taxon>
    </lineage>
</organism>
<feature type="chain" id="PRO_0000263003" description="Cystathionine beta-synthase">
    <location>
        <begin position="1"/>
        <end position="551"/>
    </location>
</feature>
<feature type="domain" description="CBS" evidence="3">
    <location>
        <begin position="418"/>
        <end position="476"/>
    </location>
</feature>
<feature type="region of interest" description="Disordered" evidence="4">
    <location>
        <begin position="1"/>
        <end position="73"/>
    </location>
</feature>
<feature type="compositionally biased region" description="Basic and acidic residues" evidence="4">
    <location>
        <begin position="32"/>
        <end position="42"/>
    </location>
</feature>
<feature type="compositionally biased region" description="Basic and acidic residues" evidence="4">
    <location>
        <begin position="63"/>
        <end position="73"/>
    </location>
</feature>
<feature type="binding site" description="axial binding residue" evidence="2">
    <location>
        <position position="52"/>
    </location>
    <ligand>
        <name>heme</name>
        <dbReference type="ChEBI" id="CHEBI:30413"/>
    </ligand>
    <ligandPart>
        <name>Fe</name>
        <dbReference type="ChEBI" id="CHEBI:18248"/>
    </ligandPart>
</feature>
<feature type="binding site" description="axial binding residue" evidence="2">
    <location>
        <position position="65"/>
    </location>
    <ligand>
        <name>heme</name>
        <dbReference type="ChEBI" id="CHEBI:30413"/>
    </ligand>
    <ligandPart>
        <name>Fe</name>
        <dbReference type="ChEBI" id="CHEBI:18248"/>
    </ligandPart>
</feature>
<feature type="binding site" evidence="2">
    <location>
        <position position="149"/>
    </location>
    <ligand>
        <name>pyridoxal 5'-phosphate</name>
        <dbReference type="ChEBI" id="CHEBI:597326"/>
    </ligand>
</feature>
<feature type="binding site" evidence="2">
    <location>
        <begin position="256"/>
        <end position="260"/>
    </location>
    <ligand>
        <name>pyridoxal 5'-phosphate</name>
        <dbReference type="ChEBI" id="CHEBI:597326"/>
    </ligand>
</feature>
<feature type="binding site" evidence="2">
    <location>
        <position position="349"/>
    </location>
    <ligand>
        <name>pyridoxal 5'-phosphate</name>
        <dbReference type="ChEBI" id="CHEBI:597326"/>
    </ligand>
</feature>
<feature type="modified residue" description="Phosphoserine" evidence="2">
    <location>
        <position position="27"/>
    </location>
</feature>
<feature type="modified residue" description="N6-(pyridoxal phosphate)lysine" evidence="2">
    <location>
        <position position="119"/>
    </location>
</feature>
<feature type="modified residue" description="Phosphoserine" evidence="2">
    <location>
        <position position="199"/>
    </location>
</feature>
<feature type="cross-link" description="Glycyl lysine isopeptide (Lys-Gly) (interchain with G-Cter in SUMO)" evidence="2">
    <location>
        <position position="211"/>
    </location>
</feature>
<dbReference type="EC" id="4.2.1.22" evidence="2"/>
<dbReference type="EMBL" id="AY952460">
    <property type="protein sequence ID" value="AAX51303.1"/>
    <property type="molecule type" value="mRNA"/>
</dbReference>
<dbReference type="RefSeq" id="NP_001270081.1">
    <property type="nucleotide sequence ID" value="NM_001283152.1"/>
</dbReference>
<dbReference type="RefSeq" id="XP_045245285.1">
    <property type="nucleotide sequence ID" value="XM_045389350.2"/>
</dbReference>
<dbReference type="RefSeq" id="XP_045245286.1">
    <property type="nucleotide sequence ID" value="XM_045389351.2"/>
</dbReference>
<dbReference type="SMR" id="Q58H57"/>
<dbReference type="STRING" id="9541.ENSMFAP00000038933"/>
<dbReference type="GeneID" id="102115084"/>
<dbReference type="VEuPathDB" id="HostDB:ENSMFAG00000038794"/>
<dbReference type="eggNOG" id="KOG1252">
    <property type="taxonomic scope" value="Eukaryota"/>
</dbReference>
<dbReference type="OMA" id="KFADDEW"/>
<dbReference type="UniPathway" id="UPA00136">
    <property type="reaction ID" value="UER00201"/>
</dbReference>
<dbReference type="Proteomes" id="UP000233100">
    <property type="component" value="Chromosome 3"/>
</dbReference>
<dbReference type="GO" id="GO:0005737">
    <property type="term" value="C:cytoplasm"/>
    <property type="evidence" value="ECO:0000250"/>
    <property type="project" value="UniProtKB"/>
</dbReference>
<dbReference type="GO" id="GO:0005634">
    <property type="term" value="C:nucleus"/>
    <property type="evidence" value="ECO:0000250"/>
    <property type="project" value="UniProtKB"/>
</dbReference>
<dbReference type="GO" id="GO:0004122">
    <property type="term" value="F:cystathionine beta-synthase activity"/>
    <property type="evidence" value="ECO:0000250"/>
    <property type="project" value="UniProtKB"/>
</dbReference>
<dbReference type="GO" id="GO:0046872">
    <property type="term" value="F:metal ion binding"/>
    <property type="evidence" value="ECO:0007669"/>
    <property type="project" value="UniProtKB-KW"/>
</dbReference>
<dbReference type="GO" id="GO:0042803">
    <property type="term" value="F:protein homodimerization activity"/>
    <property type="evidence" value="ECO:0000250"/>
    <property type="project" value="UniProtKB"/>
</dbReference>
<dbReference type="GO" id="GO:0030170">
    <property type="term" value="F:pyridoxal phosphate binding"/>
    <property type="evidence" value="ECO:0000250"/>
    <property type="project" value="UniProtKB"/>
</dbReference>
<dbReference type="GO" id="GO:0006535">
    <property type="term" value="P:cysteine biosynthetic process from serine"/>
    <property type="evidence" value="ECO:0007669"/>
    <property type="project" value="InterPro"/>
</dbReference>
<dbReference type="GO" id="GO:0019343">
    <property type="term" value="P:cysteine biosynthetic process via cystathionine"/>
    <property type="evidence" value="ECO:0007669"/>
    <property type="project" value="InterPro"/>
</dbReference>
<dbReference type="GO" id="GO:0043418">
    <property type="term" value="P:homocysteine catabolic process"/>
    <property type="evidence" value="ECO:0000250"/>
    <property type="project" value="UniProtKB"/>
</dbReference>
<dbReference type="GO" id="GO:0050667">
    <property type="term" value="P:homocysteine metabolic process"/>
    <property type="evidence" value="ECO:0000250"/>
    <property type="project" value="UniProtKB"/>
</dbReference>
<dbReference type="GO" id="GO:0070814">
    <property type="term" value="P:hydrogen sulfide biosynthetic process"/>
    <property type="evidence" value="ECO:0000250"/>
    <property type="project" value="UniProtKB"/>
</dbReference>
<dbReference type="GO" id="GO:0006563">
    <property type="term" value="P:L-serine metabolic process"/>
    <property type="evidence" value="ECO:0000250"/>
    <property type="project" value="UniProtKB"/>
</dbReference>
<dbReference type="CDD" id="cd01561">
    <property type="entry name" value="CBS_like"/>
    <property type="match status" value="1"/>
</dbReference>
<dbReference type="CDD" id="cd04608">
    <property type="entry name" value="CBS_pair_CBS"/>
    <property type="match status" value="1"/>
</dbReference>
<dbReference type="FunFam" id="3.10.580.10:FF:000014">
    <property type="entry name" value="Cystathionine beta-synthase"/>
    <property type="match status" value="1"/>
</dbReference>
<dbReference type="FunFam" id="3.40.50.1100:FF:000003">
    <property type="entry name" value="Cystathionine beta-synthase"/>
    <property type="match status" value="1"/>
</dbReference>
<dbReference type="FunFam" id="3.40.50.1100:FF:000118">
    <property type="entry name" value="Related to CYS4-cystathionine beta-synthase"/>
    <property type="match status" value="1"/>
</dbReference>
<dbReference type="Gene3D" id="3.40.50.1100">
    <property type="match status" value="2"/>
</dbReference>
<dbReference type="Gene3D" id="3.10.580.10">
    <property type="entry name" value="CBS-domain"/>
    <property type="match status" value="1"/>
</dbReference>
<dbReference type="InterPro" id="IPR046353">
    <property type="entry name" value="CBS_C"/>
</dbReference>
<dbReference type="InterPro" id="IPR000644">
    <property type="entry name" value="CBS_dom"/>
</dbReference>
<dbReference type="InterPro" id="IPR046342">
    <property type="entry name" value="CBS_dom_sf"/>
</dbReference>
<dbReference type="InterPro" id="IPR050214">
    <property type="entry name" value="Cys_Synth/Cystath_Beta-Synth"/>
</dbReference>
<dbReference type="InterPro" id="IPR005857">
    <property type="entry name" value="Cysta_beta_synth"/>
</dbReference>
<dbReference type="InterPro" id="IPR001216">
    <property type="entry name" value="P-phosphate_BS"/>
</dbReference>
<dbReference type="InterPro" id="IPR001926">
    <property type="entry name" value="TrpB-like_PALP"/>
</dbReference>
<dbReference type="InterPro" id="IPR036052">
    <property type="entry name" value="TrpB-like_PALP_sf"/>
</dbReference>
<dbReference type="NCBIfam" id="TIGR01137">
    <property type="entry name" value="cysta_beta"/>
    <property type="match status" value="1"/>
</dbReference>
<dbReference type="PANTHER" id="PTHR10314">
    <property type="entry name" value="CYSTATHIONINE BETA-SYNTHASE"/>
    <property type="match status" value="1"/>
</dbReference>
<dbReference type="Pfam" id="PF00571">
    <property type="entry name" value="CBS"/>
    <property type="match status" value="1"/>
</dbReference>
<dbReference type="Pfam" id="PF00291">
    <property type="entry name" value="PALP"/>
    <property type="match status" value="1"/>
</dbReference>
<dbReference type="SMART" id="SM00116">
    <property type="entry name" value="CBS"/>
    <property type="match status" value="1"/>
</dbReference>
<dbReference type="SUPFAM" id="SSF54631">
    <property type="entry name" value="CBS-domain pair"/>
    <property type="match status" value="1"/>
</dbReference>
<dbReference type="SUPFAM" id="SSF53686">
    <property type="entry name" value="Tryptophan synthase beta subunit-like PLP-dependent enzymes"/>
    <property type="match status" value="1"/>
</dbReference>
<dbReference type="PROSITE" id="PS51371">
    <property type="entry name" value="CBS"/>
    <property type="match status" value="1"/>
</dbReference>
<dbReference type="PROSITE" id="PS00901">
    <property type="entry name" value="CYS_SYNTHASE"/>
    <property type="match status" value="1"/>
</dbReference>
<comment type="function">
    <text evidence="1 2">Hydro-lyase catalyzing the first step of the transsulfuration pathway, where the hydroxyl group of L-serine is displaced by L-homocysteine in a beta-replacement reaction to form L-cystathionine, the precursor of L-cysteine. This catabolic route allows the elimination of L-methionine and the toxic metabolite L-homocysteine (By similarity). Also involved in the production of hydrogen sulfide, a gasotransmitter with signaling and cytoprotective effects on neurons (By similarity).</text>
</comment>
<comment type="catalytic activity">
    <reaction evidence="2">
        <text>L-homocysteine + L-serine = L,L-cystathionine + H2O</text>
        <dbReference type="Rhea" id="RHEA:10112"/>
        <dbReference type="ChEBI" id="CHEBI:15377"/>
        <dbReference type="ChEBI" id="CHEBI:33384"/>
        <dbReference type="ChEBI" id="CHEBI:58161"/>
        <dbReference type="ChEBI" id="CHEBI:58199"/>
        <dbReference type="EC" id="4.2.1.22"/>
    </reaction>
</comment>
<comment type="cofactor">
    <cofactor evidence="2">
        <name>pyridoxal 5'-phosphate</name>
        <dbReference type="ChEBI" id="CHEBI:597326"/>
    </cofactor>
</comment>
<comment type="activity regulation">
    <text evidence="2">Allosterically activated by S-adenosyl-methionine/AdoMet. Activated by S-adenosylhomocysteine/AdoHcy. Binds non-covalently to a heme group that may control the redox sensitivity of the enzyme.</text>
</comment>
<comment type="pathway">
    <text evidence="2">Amino-acid biosynthesis; L-cysteine biosynthesis; L-cysteine from L-homocysteine and L-serine: step 1/2.</text>
</comment>
<comment type="subunit">
    <text evidence="2">Homotetramer.</text>
</comment>
<comment type="subcellular location">
    <subcellularLocation>
        <location evidence="2">Cytoplasm</location>
    </subcellularLocation>
    <subcellularLocation>
        <location evidence="2">Nucleus</location>
    </subcellularLocation>
</comment>
<comment type="similarity">
    <text evidence="5">Belongs to the cysteine synthase/cystathionine beta-synthase family.</text>
</comment>
<evidence type="ECO:0000250" key="1">
    <source>
        <dbReference type="UniProtKB" id="P32232"/>
    </source>
</evidence>
<evidence type="ECO:0000250" key="2">
    <source>
        <dbReference type="UniProtKB" id="P35520"/>
    </source>
</evidence>
<evidence type="ECO:0000255" key="3">
    <source>
        <dbReference type="PROSITE-ProRule" id="PRU00703"/>
    </source>
</evidence>
<evidence type="ECO:0000256" key="4">
    <source>
        <dbReference type="SAM" id="MobiDB-lite"/>
    </source>
</evidence>
<evidence type="ECO:0000305" key="5"/>
<sequence length="551" mass="60721">MPSETPQAEVGPTGCPHLSGPHSAQGSLEKGLPGDKEAKEPLWIRPDAPSRCTWQLGRPASESPHHHTVPEKSPKILPDILKKIGDTPMIRINKIGKKFGLKCELLAKCEFFNAGGSVKDRISLRMIEDAERAGTLKPGDTIIEPTSGNTGIGLALTAAVRGYRCIIVMPEKMSSEKVDVLRALGAEIVRTPTNARFDSPESHVGVAWRLKNEIPNSHILDQYRNASNPLAHYDTTADEILRQCDGKLDMLVASVGTGGTITGIARKLKEKCPGCRIIGVDPEGSILAEPEELNQTEQTTYEVEGIGYDFIPTVLDRTVVDKWFKSNDEEAFTFARMLIAQEGLLCGGSAGSTMAVAVKAAQELQEGQRCVVILPDSVRNYMTKFLSDRWMLQKGFLKEEDLMEKKPWWWHLRVQELSLSAPLTVLPTVSCEHTIEILREKGFDQAPVVDEAGVILGMVTLGNMLSSLLAGKVQPSDQVGKVIYTQFKQIRLTDTLGRLSHILEMDHFALVVHEQIQYHSTGKSSQRQMVFGVVTAIDLLNFVAAQERDQK</sequence>
<reference key="1">
    <citation type="submission" date="2005-03" db="EMBL/GenBank/DDBJ databases">
        <title>Dual effects of hydrogen sulphide on vascular system in anesthetized monkeys in vivo and cloning, characterization of cystathionine-beta-synthase.</title>
        <authorList>
            <person name="Zhu Y.Z."/>
            <person name="Wang Z.J."/>
            <person name="Duan W."/>
            <person name="Ling L.H."/>
            <person name="Zhu Y.C."/>
            <person name="Yang H."/>
            <person name="Huang S.H."/>
            <person name="Tan C.S."/>
            <person name="Whiteman M."/>
            <person name="Moore P.K."/>
        </authorList>
    </citation>
    <scope>NUCLEOTIDE SEQUENCE [MRNA]</scope>
</reference>